<reference key="1">
    <citation type="journal article" date="1996" name="J. Mol. Biol.">
        <title>Holliday junction resolvases encoded by homologous rusA genes in Escherichia coli K-12 and phage 82.</title>
        <authorList>
            <person name="Mahdi A.A."/>
            <person name="Sharples G.J."/>
            <person name="Mandal T.N."/>
            <person name="Lloyd R.G."/>
        </authorList>
    </citation>
    <scope>NUCLEOTIDE SEQUENCE [GENOMIC DNA]</scope>
</reference>
<organismHost>
    <name type="scientific">Escherichia coli</name>
    <dbReference type="NCBI Taxonomy" id="562"/>
</organismHost>
<dbReference type="EMBL" id="X92588">
    <property type="protein sequence ID" value="CAA63327.1"/>
    <property type="molecule type" value="Genomic_DNA"/>
</dbReference>
<dbReference type="PIR" id="S66580">
    <property type="entry name" value="S66580"/>
</dbReference>
<dbReference type="FunFam" id="1.10.3790.10:FF:000001">
    <property type="entry name" value="DLP12 prophage DNA base-flipping protein"/>
    <property type="match status" value="1"/>
</dbReference>
<dbReference type="Gene3D" id="1.10.3790.10">
    <property type="entry name" value="NinB"/>
    <property type="match status" value="1"/>
</dbReference>
<dbReference type="InterPro" id="IPR036619">
    <property type="entry name" value="NinB_sf"/>
</dbReference>
<dbReference type="NCBIfam" id="NF007281">
    <property type="entry name" value="PRK09741.1"/>
    <property type="match status" value="1"/>
</dbReference>
<dbReference type="SUPFAM" id="SSF103370">
    <property type="entry name" value="NinB"/>
    <property type="match status" value="1"/>
</dbReference>
<protein>
    <recommendedName>
        <fullName>Uncharacterized protein in rusA 5'region</fullName>
    </recommendedName>
    <alternativeName>
        <fullName>ORF151</fullName>
    </alternativeName>
</protein>
<proteinExistence type="predicted"/>
<name>YBCN_BP82</name>
<sequence>MNFPQDGIKLHRGNFTAIGRQIQPYLEDGKCFRMVLKPWRERRSLSQNALSHMWYSEISEYLISKGKTFATPAWVKDALKHTYLGYETKDLVDVVTGDITTIQSLRHTSDLDTGEMYVFLCKVEAWAMNIGCHLTIPQSCEFQLLRDKQEA</sequence>
<feature type="chain" id="PRO_0000168653" description="Uncharacterized protein in rusA 5'region">
    <location>
        <begin position="1"/>
        <end position="151"/>
    </location>
</feature>
<accession>Q37870</accession>
<organism>
    <name type="scientific">Enterobacteria phage 82</name>
    <name type="common">Bacteriophage 82</name>
    <dbReference type="NCBI Taxonomy" id="10705"/>
    <lineage>
        <taxon>Viruses</taxon>
        <taxon>Duplodnaviria</taxon>
        <taxon>Heunggongvirae</taxon>
        <taxon>Uroviricota</taxon>
        <taxon>Caudoviricetes</taxon>
        <taxon>Lambdavirus</taxon>
    </lineage>
</organism>
<evidence type="ECO:0000305" key="1"/>
<comment type="similarity">
    <text evidence="1">To E.coli ybcN.</text>
</comment>